<evidence type="ECO:0000255" key="1">
    <source>
        <dbReference type="HAMAP-Rule" id="MF_01185"/>
    </source>
</evidence>
<dbReference type="EMBL" id="CP000726">
    <property type="protein sequence ID" value="ABS33663.1"/>
    <property type="molecule type" value="Genomic_DNA"/>
</dbReference>
<dbReference type="RefSeq" id="WP_011987029.1">
    <property type="nucleotide sequence ID" value="NC_009697.1"/>
</dbReference>
<dbReference type="SMR" id="A7FWY8"/>
<dbReference type="GeneID" id="5186937"/>
<dbReference type="KEGG" id="cba:CLB_2679"/>
<dbReference type="HOGENOM" id="CLU_112356_0_2_9"/>
<dbReference type="GO" id="GO:0005737">
    <property type="term" value="C:cytoplasm"/>
    <property type="evidence" value="ECO:0007669"/>
    <property type="project" value="UniProtKB-SubCell"/>
</dbReference>
<dbReference type="GO" id="GO:0044780">
    <property type="term" value="P:bacterial-type flagellum assembly"/>
    <property type="evidence" value="ECO:0007669"/>
    <property type="project" value="UniProtKB-UniRule"/>
</dbReference>
<dbReference type="GO" id="GO:0006417">
    <property type="term" value="P:regulation of translation"/>
    <property type="evidence" value="ECO:0007669"/>
    <property type="project" value="UniProtKB-KW"/>
</dbReference>
<dbReference type="Gene3D" id="2.30.290.10">
    <property type="entry name" value="BH3618-like"/>
    <property type="match status" value="1"/>
</dbReference>
<dbReference type="HAMAP" id="MF_01185">
    <property type="entry name" value="FliW"/>
    <property type="match status" value="1"/>
</dbReference>
<dbReference type="InterPro" id="IPR003775">
    <property type="entry name" value="Flagellar_assembly_factor_FliW"/>
</dbReference>
<dbReference type="InterPro" id="IPR024046">
    <property type="entry name" value="Flagellar_assmbl_FliW_dom_sf"/>
</dbReference>
<dbReference type="NCBIfam" id="NF009793">
    <property type="entry name" value="PRK13285.1-1"/>
    <property type="match status" value="1"/>
</dbReference>
<dbReference type="PANTHER" id="PTHR39190">
    <property type="entry name" value="FLAGELLAR ASSEMBLY FACTOR FLIW"/>
    <property type="match status" value="1"/>
</dbReference>
<dbReference type="PANTHER" id="PTHR39190:SF1">
    <property type="entry name" value="FLAGELLAR ASSEMBLY FACTOR FLIW"/>
    <property type="match status" value="1"/>
</dbReference>
<dbReference type="Pfam" id="PF02623">
    <property type="entry name" value="FliW"/>
    <property type="match status" value="1"/>
</dbReference>
<dbReference type="SUPFAM" id="SSF141457">
    <property type="entry name" value="BH3618-like"/>
    <property type="match status" value="1"/>
</dbReference>
<accession>A7FWY8</accession>
<feature type="chain" id="PRO_1000065813" description="Flagellar assembly factor FliW">
    <location>
        <begin position="1"/>
        <end position="143"/>
    </location>
</feature>
<proteinExistence type="inferred from homology"/>
<comment type="function">
    <text evidence="1">Acts as an anti-CsrA protein, binds CsrA and prevents it from repressing translation of its target genes, one of which is flagellin. Binds to flagellin and participates in the assembly of the flagellum.</text>
</comment>
<comment type="subunit">
    <text evidence="1">Interacts with translational regulator CsrA and flagellin(s).</text>
</comment>
<comment type="subcellular location">
    <subcellularLocation>
        <location evidence="1">Cytoplasm</location>
    </subcellularLocation>
</comment>
<comment type="similarity">
    <text evidence="1">Belongs to the FliW family.</text>
</comment>
<protein>
    <recommendedName>
        <fullName evidence="1">Flagellar assembly factor FliW</fullName>
    </recommendedName>
</protein>
<keyword id="KW-1005">Bacterial flagellum biogenesis</keyword>
<keyword id="KW-0143">Chaperone</keyword>
<keyword id="KW-0963">Cytoplasm</keyword>
<keyword id="KW-0810">Translation regulation</keyword>
<gene>
    <name evidence="1" type="primary">fliW</name>
    <name type="ordered locus">CLB_2679</name>
</gene>
<sequence>MKLNTKYHGCIEYEEKDVIYFQKGIPGFEELNKFIIFPVEDNEVFLVFHSIENEDIGIIVTSPFNIENNYEIQLEEEQITNLKLQDEKDALVLNTVTLDSDIDKITVNLRAPIIINIKEKIGEQIIINSDKYKVKHSLFKEEA</sequence>
<organism>
    <name type="scientific">Clostridium botulinum (strain ATCC 19397 / Type A)</name>
    <dbReference type="NCBI Taxonomy" id="441770"/>
    <lineage>
        <taxon>Bacteria</taxon>
        <taxon>Bacillati</taxon>
        <taxon>Bacillota</taxon>
        <taxon>Clostridia</taxon>
        <taxon>Eubacteriales</taxon>
        <taxon>Clostridiaceae</taxon>
        <taxon>Clostridium</taxon>
    </lineage>
</organism>
<name>FLIW_CLOB1</name>
<reference key="1">
    <citation type="journal article" date="2007" name="PLoS ONE">
        <title>Analysis of the neurotoxin complex genes in Clostridium botulinum A1-A4 and B1 strains: BoNT/A3, /Ba4 and /B1 clusters are located within plasmids.</title>
        <authorList>
            <person name="Smith T.J."/>
            <person name="Hill K.K."/>
            <person name="Foley B.T."/>
            <person name="Detter J.C."/>
            <person name="Munk A.C."/>
            <person name="Bruce D.C."/>
            <person name="Doggett N.A."/>
            <person name="Smith L.A."/>
            <person name="Marks J.D."/>
            <person name="Xie G."/>
            <person name="Brettin T.S."/>
        </authorList>
    </citation>
    <scope>NUCLEOTIDE SEQUENCE [LARGE SCALE GENOMIC DNA]</scope>
    <source>
        <strain>ATCC 19397 / Type A</strain>
    </source>
</reference>